<evidence type="ECO:0000255" key="1"/>
<evidence type="ECO:0000305" key="2"/>
<gene>
    <name type="ORF">UNQ5830/PRO19650/PRO19816</name>
</gene>
<keyword id="KW-0325">Glycoprotein</keyword>
<keyword id="KW-1185">Reference proteome</keyword>
<keyword id="KW-0964">Secreted</keyword>
<keyword id="KW-0732">Signal</keyword>
<sequence>MAILMLSLQLILLLIPSISHEAHKTSLSSWKHDQDWANVSNMTFSNGKLRVKGIYYRNADICSRHRVTSAGLTLQDLQLWCNLRSVARGQIPSTL</sequence>
<feature type="signal peptide" evidence="1">
    <location>
        <begin position="1"/>
        <end position="19"/>
    </location>
</feature>
<feature type="chain" id="PRO_0000317719" description="Putative uncharacterized protein UNQ5830/PRO19650/PRO19816">
    <location>
        <begin position="20"/>
        <end position="95"/>
    </location>
</feature>
<feature type="glycosylation site" description="N-linked (GlcNAc...) asparagine" evidence="1">
    <location>
        <position position="38"/>
    </location>
</feature>
<feature type="glycosylation site" description="N-linked (GlcNAc...) asparagine" evidence="1">
    <location>
        <position position="41"/>
    </location>
</feature>
<feature type="sequence conflict" description="In Ref. 1; AAQ89101." evidence="2" ref="1">
    <original>M</original>
    <variation>T</variation>
    <location>
        <position position="5"/>
    </location>
</feature>
<reference key="1">
    <citation type="journal article" date="2003" name="Genome Res.">
        <title>The secreted protein discovery initiative (SPDI), a large-scale effort to identify novel human secreted and transmembrane proteins: a bioinformatics assessment.</title>
        <authorList>
            <person name="Clark H.F."/>
            <person name="Gurney A.L."/>
            <person name="Abaya E."/>
            <person name="Baker K."/>
            <person name="Baldwin D.T."/>
            <person name="Brush J."/>
            <person name="Chen J."/>
            <person name="Chow B."/>
            <person name="Chui C."/>
            <person name="Crowley C."/>
            <person name="Currell B."/>
            <person name="Deuel B."/>
            <person name="Dowd P."/>
            <person name="Eaton D."/>
            <person name="Foster J.S."/>
            <person name="Grimaldi C."/>
            <person name="Gu Q."/>
            <person name="Hass P.E."/>
            <person name="Heldens S."/>
            <person name="Huang A."/>
            <person name="Kim H.S."/>
            <person name="Klimowski L."/>
            <person name="Jin Y."/>
            <person name="Johnson S."/>
            <person name="Lee J."/>
            <person name="Lewis L."/>
            <person name="Liao D."/>
            <person name="Mark M.R."/>
            <person name="Robbie E."/>
            <person name="Sanchez C."/>
            <person name="Schoenfeld J."/>
            <person name="Seshagiri S."/>
            <person name="Simmons L."/>
            <person name="Singh J."/>
            <person name="Smith V."/>
            <person name="Stinson J."/>
            <person name="Vagts A."/>
            <person name="Vandlen R.L."/>
            <person name="Watanabe C."/>
            <person name="Wieand D."/>
            <person name="Woods K."/>
            <person name="Xie M.-H."/>
            <person name="Yansura D.G."/>
            <person name="Yi S."/>
            <person name="Yu G."/>
            <person name="Yuan J."/>
            <person name="Zhang M."/>
            <person name="Zhang Z."/>
            <person name="Goddard A.D."/>
            <person name="Wood W.I."/>
            <person name="Godowski P.J."/>
            <person name="Gray A.M."/>
        </authorList>
    </citation>
    <scope>NUCLEOTIDE SEQUENCE [LARGE SCALE MRNA]</scope>
</reference>
<accession>Q6UY13</accession>
<accession>Q6UWL7</accession>
<proteinExistence type="inferred from homology"/>
<protein>
    <recommendedName>
        <fullName>Putative uncharacterized protein UNQ5830/PRO19650/PRO19816</fullName>
    </recommendedName>
</protein>
<name>YB003_HUMAN</name>
<dbReference type="EMBL" id="AY358123">
    <property type="protein sequence ID" value="AAQ88490.1"/>
    <property type="molecule type" value="mRNA"/>
</dbReference>
<dbReference type="EMBL" id="AY358741">
    <property type="protein sequence ID" value="AAQ89101.1"/>
    <property type="molecule type" value="mRNA"/>
</dbReference>
<dbReference type="GlyGen" id="Q6UY13">
    <property type="glycosylation" value="2 sites"/>
</dbReference>
<dbReference type="iPTMnet" id="Q6UY13"/>
<dbReference type="PhosphoSitePlus" id="Q6UY13"/>
<dbReference type="BioMuta" id="UNQ5830/PRO19650/PRO19816"/>
<dbReference type="PeptideAtlas" id="Q6UY13"/>
<dbReference type="neXtProt" id="NX_Q6UY13"/>
<dbReference type="InParanoid" id="Q6UY13"/>
<dbReference type="PAN-GO" id="Q6UY13">
    <property type="GO annotations" value="0 GO annotations based on evolutionary models"/>
</dbReference>
<dbReference type="PhylomeDB" id="Q6UY13"/>
<dbReference type="Pharos" id="Q6UY13">
    <property type="development level" value="Tdark"/>
</dbReference>
<dbReference type="Proteomes" id="UP000005640">
    <property type="component" value="Unplaced"/>
</dbReference>
<dbReference type="RNAct" id="Q6UY13">
    <property type="molecule type" value="protein"/>
</dbReference>
<dbReference type="GO" id="GO:0005615">
    <property type="term" value="C:extracellular space"/>
    <property type="evidence" value="ECO:0000318"/>
    <property type="project" value="GO_Central"/>
</dbReference>
<dbReference type="GO" id="GO:0005125">
    <property type="term" value="F:cytokine activity"/>
    <property type="evidence" value="ECO:0000318"/>
    <property type="project" value="GO_Central"/>
</dbReference>
<dbReference type="GO" id="GO:0007166">
    <property type="term" value="P:cell surface receptor signaling pathway"/>
    <property type="evidence" value="ECO:0000318"/>
    <property type="project" value="GO_Central"/>
</dbReference>
<dbReference type="GO" id="GO:0043123">
    <property type="term" value="P:positive regulation of canonical NF-kappaB signal transduction"/>
    <property type="evidence" value="ECO:0000318"/>
    <property type="project" value="GO_Central"/>
</dbReference>
<dbReference type="GO" id="GO:2001238">
    <property type="term" value="P:positive regulation of extrinsic apoptotic signaling pathway"/>
    <property type="evidence" value="ECO:0000318"/>
    <property type="project" value="GO_Central"/>
</dbReference>
<dbReference type="GO" id="GO:0045672">
    <property type="term" value="P:positive regulation of osteoclast differentiation"/>
    <property type="evidence" value="ECO:0000318"/>
    <property type="project" value="GO_Central"/>
</dbReference>
<dbReference type="Gene3D" id="2.60.120.40">
    <property type="match status" value="1"/>
</dbReference>
<dbReference type="InterPro" id="IPR008983">
    <property type="entry name" value="Tumour_necrosis_fac-like_dom"/>
</dbReference>
<dbReference type="SUPFAM" id="SSF49842">
    <property type="entry name" value="TNF-like"/>
    <property type="match status" value="1"/>
</dbReference>
<comment type="subcellular location">
    <subcellularLocation>
        <location evidence="2">Secreted</location>
    </subcellularLocation>
</comment>
<organism>
    <name type="scientific">Homo sapiens</name>
    <name type="common">Human</name>
    <dbReference type="NCBI Taxonomy" id="9606"/>
    <lineage>
        <taxon>Eukaryota</taxon>
        <taxon>Metazoa</taxon>
        <taxon>Chordata</taxon>
        <taxon>Craniata</taxon>
        <taxon>Vertebrata</taxon>
        <taxon>Euteleostomi</taxon>
        <taxon>Mammalia</taxon>
        <taxon>Eutheria</taxon>
        <taxon>Euarchontoglires</taxon>
        <taxon>Primates</taxon>
        <taxon>Haplorrhini</taxon>
        <taxon>Catarrhini</taxon>
        <taxon>Hominidae</taxon>
        <taxon>Homo</taxon>
    </lineage>
</organism>